<organism>
    <name type="scientific">Helicobacter pylori (strain ATCC 700392 / 26695)</name>
    <name type="common">Campylobacter pylori</name>
    <dbReference type="NCBI Taxonomy" id="85962"/>
    <lineage>
        <taxon>Bacteria</taxon>
        <taxon>Pseudomonadati</taxon>
        <taxon>Campylobacterota</taxon>
        <taxon>Epsilonproteobacteria</taxon>
        <taxon>Campylobacterales</taxon>
        <taxon>Helicobacteraceae</taxon>
        <taxon>Helicobacter</taxon>
    </lineage>
</organism>
<evidence type="ECO:0000255" key="1"/>
<evidence type="ECO:0000305" key="2"/>
<proteinExistence type="inferred from homology"/>
<name>Y415_HELPY</name>
<accession>O25170</accession>
<comment type="subcellular location">
    <subcellularLocation>
        <location evidence="2">Cell membrane</location>
        <topology evidence="2">Multi-pass membrane protein</topology>
    </subcellularLocation>
</comment>
<comment type="similarity">
    <text evidence="2">Belongs to the MscS (TC 1.A.23) family.</text>
</comment>
<feature type="chain" id="PRO_0000110249" description="Uncharacterized MscS family protein HP_0415">
    <location>
        <begin position="1"/>
        <end position="623"/>
    </location>
</feature>
<feature type="transmembrane region" description="Helical" evidence="1">
    <location>
        <begin position="242"/>
        <end position="262"/>
    </location>
</feature>
<feature type="transmembrane region" description="Helical" evidence="1">
    <location>
        <begin position="288"/>
        <end position="308"/>
    </location>
</feature>
<feature type="transmembrane region" description="Helical" evidence="1">
    <location>
        <begin position="318"/>
        <end position="338"/>
    </location>
</feature>
<feature type="transmembrane region" description="Helical" evidence="1">
    <location>
        <begin position="361"/>
        <end position="381"/>
    </location>
</feature>
<feature type="transmembrane region" description="Helical" evidence="1">
    <location>
        <begin position="387"/>
        <end position="407"/>
    </location>
</feature>
<gene>
    <name type="ordered locus">HP_0415</name>
</gene>
<reference key="1">
    <citation type="journal article" date="1997" name="Nature">
        <title>The complete genome sequence of the gastric pathogen Helicobacter pylori.</title>
        <authorList>
            <person name="Tomb J.-F."/>
            <person name="White O."/>
            <person name="Kerlavage A.R."/>
            <person name="Clayton R.A."/>
            <person name="Sutton G.G."/>
            <person name="Fleischmann R.D."/>
            <person name="Ketchum K.A."/>
            <person name="Klenk H.-P."/>
            <person name="Gill S.R."/>
            <person name="Dougherty B.A."/>
            <person name="Nelson K.E."/>
            <person name="Quackenbush J."/>
            <person name="Zhou L."/>
            <person name="Kirkness E.F."/>
            <person name="Peterson S.N."/>
            <person name="Loftus B.J."/>
            <person name="Richardson D.L."/>
            <person name="Dodson R.J."/>
            <person name="Khalak H.G."/>
            <person name="Glodek A."/>
            <person name="McKenney K."/>
            <person name="FitzGerald L.M."/>
            <person name="Lee N."/>
            <person name="Adams M.D."/>
            <person name="Hickey E.K."/>
            <person name="Berg D.E."/>
            <person name="Gocayne J.D."/>
            <person name="Utterback T.R."/>
            <person name="Peterson J.D."/>
            <person name="Kelley J.M."/>
            <person name="Cotton M.D."/>
            <person name="Weidman J.F."/>
            <person name="Fujii C."/>
            <person name="Bowman C."/>
            <person name="Watthey L."/>
            <person name="Wallin E."/>
            <person name="Hayes W.S."/>
            <person name="Borodovsky M."/>
            <person name="Karp P.D."/>
            <person name="Smith H.O."/>
            <person name="Fraser C.M."/>
            <person name="Venter J.C."/>
        </authorList>
    </citation>
    <scope>NUCLEOTIDE SEQUENCE [LARGE SCALE GENOMIC DNA]</scope>
    <source>
        <strain>ATCC 700392 / 26695</strain>
    </source>
</reference>
<sequence length="623" mass="71286">MRLLLWWVLVLSLFLNPLRAVEEHETDAVDLFLIFNQINQLNQVIETYKKNPERSAEISLYNTQKNDLIKSLTSKVLNERDKIGIDINQNLKEQEKIKKRLSKSINGDDFYTFMKDRLSLDILLIDEILYRFIDKIRSSIDIFSEQKDVESISDAFLLRLGQFKLYTFPKNLGNVKMHELEQMFSDYELRLNTYTEVLRYIKNHPKEVLPKNLIMEVNMDFVLNKISKVLPFTTHSLQVSKIVLALTILALLLGLRKLITWLLALLLDRIFEIMQRNKKMHVNVQKSIVSPVSVFLALFSCDVALDIFYYPNASPPKVSMWVGAVYIMLLAWLVIALFKGYGEALVTNMATKSTHNFRKEVINLILKVVYFLIFIVALLGVLKQLGFNVSAIIASLGIGGLAVALAVKDVLANFFASVILLLDNSFSQGDWIVCGEVEGTVVEMGLRRTTIRAFDNALLSVPNSELAGKPIRNWSRRKVGRRIKMEIGLTYSSSQSALQLCVKDIKEMLENHPKIANGADSALQNVSDYRYMFKKDIVSIDDFLGYKNNLFVFLDQFADSSINILVYCFSKTVVWEEWLEVKEDVMLKIMGIVEKHHLSFAFPSQSLYVESLPEVSLKEGAKI</sequence>
<keyword id="KW-1003">Cell membrane</keyword>
<keyword id="KW-0472">Membrane</keyword>
<keyword id="KW-1185">Reference proteome</keyword>
<keyword id="KW-0812">Transmembrane</keyword>
<keyword id="KW-1133">Transmembrane helix</keyword>
<protein>
    <recommendedName>
        <fullName>Uncharacterized MscS family protein HP_0415</fullName>
    </recommendedName>
</protein>
<dbReference type="EMBL" id="AE000511">
    <property type="protein sequence ID" value="AAD07481.1"/>
    <property type="molecule type" value="Genomic_DNA"/>
</dbReference>
<dbReference type="PIR" id="G64571">
    <property type="entry name" value="G64571"/>
</dbReference>
<dbReference type="RefSeq" id="NP_207213.1">
    <property type="nucleotide sequence ID" value="NC_000915.1"/>
</dbReference>
<dbReference type="RefSeq" id="WP_001238108.1">
    <property type="nucleotide sequence ID" value="NC_018939.1"/>
</dbReference>
<dbReference type="SMR" id="O25170"/>
<dbReference type="DIP" id="DIP-3304N"/>
<dbReference type="IntAct" id="O25170">
    <property type="interactions" value="2"/>
</dbReference>
<dbReference type="MINT" id="O25170"/>
<dbReference type="TCDB" id="1.A.23.4.10">
    <property type="family name" value="the small conductance mechanosensitive ion channel (mscs) family"/>
</dbReference>
<dbReference type="PaxDb" id="85962-C694_02115"/>
<dbReference type="EnsemblBacteria" id="AAD07481">
    <property type="protein sequence ID" value="AAD07481"/>
    <property type="gene ID" value="HP_0415"/>
</dbReference>
<dbReference type="KEGG" id="heo:C694_02115"/>
<dbReference type="KEGG" id="hpy:HP_0415"/>
<dbReference type="PATRIC" id="fig|85962.47.peg.440"/>
<dbReference type="eggNOG" id="COG0668">
    <property type="taxonomic scope" value="Bacteria"/>
</dbReference>
<dbReference type="InParanoid" id="O25170"/>
<dbReference type="OrthoDB" id="9775207at2"/>
<dbReference type="PhylomeDB" id="O25170"/>
<dbReference type="Proteomes" id="UP000000429">
    <property type="component" value="Chromosome"/>
</dbReference>
<dbReference type="GO" id="GO:0005886">
    <property type="term" value="C:plasma membrane"/>
    <property type="evidence" value="ECO:0007669"/>
    <property type="project" value="UniProtKB-SubCell"/>
</dbReference>
<dbReference type="GO" id="GO:0055085">
    <property type="term" value="P:transmembrane transport"/>
    <property type="evidence" value="ECO:0007669"/>
    <property type="project" value="InterPro"/>
</dbReference>
<dbReference type="Gene3D" id="1.10.287.1260">
    <property type="match status" value="1"/>
</dbReference>
<dbReference type="Gene3D" id="2.30.30.60">
    <property type="match status" value="1"/>
</dbReference>
<dbReference type="Gene3D" id="3.30.70.100">
    <property type="match status" value="1"/>
</dbReference>
<dbReference type="InterPro" id="IPR010920">
    <property type="entry name" value="LSM_dom_sf"/>
</dbReference>
<dbReference type="InterPro" id="IPR049142">
    <property type="entry name" value="MS_channel_1st"/>
</dbReference>
<dbReference type="InterPro" id="IPR049278">
    <property type="entry name" value="MS_channel_C"/>
</dbReference>
<dbReference type="InterPro" id="IPR023408">
    <property type="entry name" value="MscS_beta-dom_sf"/>
</dbReference>
<dbReference type="InterPro" id="IPR006685">
    <property type="entry name" value="MscS_channel_2nd"/>
</dbReference>
<dbReference type="InterPro" id="IPR011066">
    <property type="entry name" value="MscS_channel_C_sf"/>
</dbReference>
<dbReference type="InterPro" id="IPR006686">
    <property type="entry name" value="MscS_channel_CS"/>
</dbReference>
<dbReference type="InterPro" id="IPR011014">
    <property type="entry name" value="MscS_channel_TM-2"/>
</dbReference>
<dbReference type="InterPro" id="IPR045042">
    <property type="entry name" value="YnaI-like"/>
</dbReference>
<dbReference type="PANTHER" id="PTHR43634:SF2">
    <property type="entry name" value="LOW CONDUCTANCE MECHANOSENSITIVE CHANNEL YNAI"/>
    <property type="match status" value="1"/>
</dbReference>
<dbReference type="PANTHER" id="PTHR43634">
    <property type="entry name" value="OW CONDUCTANCE MECHANOSENSITIVE CHANNEL"/>
    <property type="match status" value="1"/>
</dbReference>
<dbReference type="Pfam" id="PF21088">
    <property type="entry name" value="MS_channel_1st"/>
    <property type="match status" value="1"/>
</dbReference>
<dbReference type="Pfam" id="PF00924">
    <property type="entry name" value="MS_channel_2nd"/>
    <property type="match status" value="1"/>
</dbReference>
<dbReference type="Pfam" id="PF21082">
    <property type="entry name" value="MS_channel_3rd"/>
    <property type="match status" value="1"/>
</dbReference>
<dbReference type="SUPFAM" id="SSF82689">
    <property type="entry name" value="Mechanosensitive channel protein MscS (YggB), C-terminal domain"/>
    <property type="match status" value="1"/>
</dbReference>
<dbReference type="SUPFAM" id="SSF82861">
    <property type="entry name" value="Mechanosensitive channel protein MscS (YggB), transmembrane region"/>
    <property type="match status" value="1"/>
</dbReference>
<dbReference type="SUPFAM" id="SSF50182">
    <property type="entry name" value="Sm-like ribonucleoproteins"/>
    <property type="match status" value="1"/>
</dbReference>
<dbReference type="PROSITE" id="PS01246">
    <property type="entry name" value="UPF0003"/>
    <property type="match status" value="1"/>
</dbReference>